<comment type="function">
    <text evidence="1">Catalyzes the attachment of threonine to tRNA(Thr) in a two-step reaction: L-threonine is first activated by ATP to form Thr-AMP and then transferred to the acceptor end of tRNA(Thr). Also edits incorrectly charged L-seryl-tRNA(Thr).</text>
</comment>
<comment type="catalytic activity">
    <reaction evidence="1">
        <text>tRNA(Thr) + L-threonine + ATP = L-threonyl-tRNA(Thr) + AMP + diphosphate + H(+)</text>
        <dbReference type="Rhea" id="RHEA:24624"/>
        <dbReference type="Rhea" id="RHEA-COMP:9670"/>
        <dbReference type="Rhea" id="RHEA-COMP:9704"/>
        <dbReference type="ChEBI" id="CHEBI:15378"/>
        <dbReference type="ChEBI" id="CHEBI:30616"/>
        <dbReference type="ChEBI" id="CHEBI:33019"/>
        <dbReference type="ChEBI" id="CHEBI:57926"/>
        <dbReference type="ChEBI" id="CHEBI:78442"/>
        <dbReference type="ChEBI" id="CHEBI:78534"/>
        <dbReference type="ChEBI" id="CHEBI:456215"/>
        <dbReference type="EC" id="6.1.1.3"/>
    </reaction>
</comment>
<comment type="cofactor">
    <cofactor evidence="1">
        <name>Zn(2+)</name>
        <dbReference type="ChEBI" id="CHEBI:29105"/>
    </cofactor>
    <text evidence="1">Binds 1 zinc ion per subunit.</text>
</comment>
<comment type="subunit">
    <text evidence="1">Homodimer.</text>
</comment>
<comment type="subcellular location">
    <subcellularLocation>
        <location evidence="1">Cytoplasm</location>
    </subcellularLocation>
</comment>
<comment type="similarity">
    <text evidence="1">Belongs to the class-II aminoacyl-tRNA synthetase family.</text>
</comment>
<organism>
    <name type="scientific">Prochlorococcus marinus (strain AS9601)</name>
    <dbReference type="NCBI Taxonomy" id="146891"/>
    <lineage>
        <taxon>Bacteria</taxon>
        <taxon>Bacillati</taxon>
        <taxon>Cyanobacteriota</taxon>
        <taxon>Cyanophyceae</taxon>
        <taxon>Synechococcales</taxon>
        <taxon>Prochlorococcaceae</taxon>
        <taxon>Prochlorococcus</taxon>
    </lineage>
</organism>
<name>SYT_PROMS</name>
<protein>
    <recommendedName>
        <fullName evidence="1">Threonine--tRNA ligase</fullName>
        <ecNumber evidence="1">6.1.1.3</ecNumber>
    </recommendedName>
    <alternativeName>
        <fullName evidence="1">Threonyl-tRNA synthetase</fullName>
        <shortName evidence="1">ThrRS</shortName>
    </alternativeName>
</protein>
<reference key="1">
    <citation type="journal article" date="2007" name="PLoS Genet.">
        <title>Patterns and implications of gene gain and loss in the evolution of Prochlorococcus.</title>
        <authorList>
            <person name="Kettler G.C."/>
            <person name="Martiny A.C."/>
            <person name="Huang K."/>
            <person name="Zucker J."/>
            <person name="Coleman M.L."/>
            <person name="Rodrigue S."/>
            <person name="Chen F."/>
            <person name="Lapidus A."/>
            <person name="Ferriera S."/>
            <person name="Johnson J."/>
            <person name="Steglich C."/>
            <person name="Church G.M."/>
            <person name="Richardson P."/>
            <person name="Chisholm S.W."/>
        </authorList>
    </citation>
    <scope>NUCLEOTIDE SEQUENCE [LARGE SCALE GENOMIC DNA]</scope>
    <source>
        <strain>AS9601</strain>
    </source>
</reference>
<accession>A2BQ78</accession>
<evidence type="ECO:0000255" key="1">
    <source>
        <dbReference type="HAMAP-Rule" id="MF_00184"/>
    </source>
</evidence>
<evidence type="ECO:0000255" key="2">
    <source>
        <dbReference type="PROSITE-ProRule" id="PRU01228"/>
    </source>
</evidence>
<proteinExistence type="inferred from homology"/>
<sequence>MPIITLPDGSKKVFEKSVTILEIAQSIGAGLAKATIAGKVNDVLLDATIPINKDSKVVIITSKDKEGIEIIRHSFAHLIGHAVKQIYSDIKMAIGPVIEDGFYYDIFSEYRFTPEDLIKIENRINQLIKTNYDVEILQVSKEEAIKTFKERDETFKLRIIEEIPEEGLINLYKHEEYIDMCRGPHVPNTRHLRHFKLLKLSGSYWRGNSENESLQRIYGTAWAKEKELKDYLTRIEEAEKRDHRKLGKKHSLFHIQEESPGMIFWHPNGWTIYQVLEKYIREILKKNDYLEIKTPQAVDKSLWEKSGHWEKFRDDMFTTASENRTYAIKPMNCPCHIQIFNQGLKSYKDLPIRLAEFGSCHRNEPSGALHGLMRVRNFTQDDAHIFCTEEQIQEEVSTFIDLVFEVYKTFGFDEIIIKLSTRPEKRVGSEDIWDKSEEALTKALDNKNLKWELQPGEGAFYGPKIEFSLKDCLNRVWQCGTIQVDFSMPIRLDATYVDIDNEKRNPVMLHRAILGSFERFIGILIEQYEAKFPIWLAPYQIILLSITDRNIEKCLKFNELINNNGYRSKVDIRNEKIGYKIREATLGRVPLIAVIGDKEEEIDSVALRALNGKNLGIFNLPNLFKLMDELIEKKGRTE</sequence>
<dbReference type="EC" id="6.1.1.3" evidence="1"/>
<dbReference type="EMBL" id="CP000551">
    <property type="protein sequence ID" value="ABM69939.1"/>
    <property type="molecule type" value="Genomic_DNA"/>
</dbReference>
<dbReference type="RefSeq" id="WP_011818101.1">
    <property type="nucleotide sequence ID" value="NC_008816.1"/>
</dbReference>
<dbReference type="SMR" id="A2BQ78"/>
<dbReference type="STRING" id="146891.A9601_06531"/>
<dbReference type="KEGG" id="pmb:A9601_06531"/>
<dbReference type="eggNOG" id="COG0441">
    <property type="taxonomic scope" value="Bacteria"/>
</dbReference>
<dbReference type="HOGENOM" id="CLU_008554_0_1_3"/>
<dbReference type="OrthoDB" id="9802304at2"/>
<dbReference type="Proteomes" id="UP000002590">
    <property type="component" value="Chromosome"/>
</dbReference>
<dbReference type="GO" id="GO:0005829">
    <property type="term" value="C:cytosol"/>
    <property type="evidence" value="ECO:0007669"/>
    <property type="project" value="TreeGrafter"/>
</dbReference>
<dbReference type="GO" id="GO:0005524">
    <property type="term" value="F:ATP binding"/>
    <property type="evidence" value="ECO:0007669"/>
    <property type="project" value="UniProtKB-UniRule"/>
</dbReference>
<dbReference type="GO" id="GO:0046872">
    <property type="term" value="F:metal ion binding"/>
    <property type="evidence" value="ECO:0007669"/>
    <property type="project" value="UniProtKB-KW"/>
</dbReference>
<dbReference type="GO" id="GO:0004829">
    <property type="term" value="F:threonine-tRNA ligase activity"/>
    <property type="evidence" value="ECO:0007669"/>
    <property type="project" value="UniProtKB-UniRule"/>
</dbReference>
<dbReference type="GO" id="GO:0000049">
    <property type="term" value="F:tRNA binding"/>
    <property type="evidence" value="ECO:0007669"/>
    <property type="project" value="UniProtKB-KW"/>
</dbReference>
<dbReference type="GO" id="GO:0006435">
    <property type="term" value="P:threonyl-tRNA aminoacylation"/>
    <property type="evidence" value="ECO:0007669"/>
    <property type="project" value="UniProtKB-UniRule"/>
</dbReference>
<dbReference type="CDD" id="cd01667">
    <property type="entry name" value="TGS_ThrRS"/>
    <property type="match status" value="1"/>
</dbReference>
<dbReference type="CDD" id="cd00771">
    <property type="entry name" value="ThrRS_core"/>
    <property type="match status" value="1"/>
</dbReference>
<dbReference type="FunFam" id="3.10.20.30:FF:000005">
    <property type="entry name" value="Threonine--tRNA ligase"/>
    <property type="match status" value="1"/>
</dbReference>
<dbReference type="FunFam" id="3.30.54.20:FF:000002">
    <property type="entry name" value="Threonine--tRNA ligase"/>
    <property type="match status" value="1"/>
</dbReference>
<dbReference type="FunFam" id="3.30.930.10:FF:000002">
    <property type="entry name" value="Threonine--tRNA ligase"/>
    <property type="match status" value="1"/>
</dbReference>
<dbReference type="FunFam" id="3.30.980.10:FF:000005">
    <property type="entry name" value="Threonyl-tRNA synthetase, mitochondrial"/>
    <property type="match status" value="1"/>
</dbReference>
<dbReference type="Gene3D" id="3.10.20.30">
    <property type="match status" value="1"/>
</dbReference>
<dbReference type="Gene3D" id="3.30.54.20">
    <property type="match status" value="1"/>
</dbReference>
<dbReference type="Gene3D" id="3.40.50.800">
    <property type="entry name" value="Anticodon-binding domain"/>
    <property type="match status" value="1"/>
</dbReference>
<dbReference type="Gene3D" id="3.30.930.10">
    <property type="entry name" value="Bira Bifunctional Protein, Domain 2"/>
    <property type="match status" value="1"/>
</dbReference>
<dbReference type="Gene3D" id="3.30.980.10">
    <property type="entry name" value="Threonyl-trna Synthetase, Chain A, domain 2"/>
    <property type="match status" value="1"/>
</dbReference>
<dbReference type="HAMAP" id="MF_00184">
    <property type="entry name" value="Thr_tRNA_synth"/>
    <property type="match status" value="1"/>
</dbReference>
<dbReference type="InterPro" id="IPR002314">
    <property type="entry name" value="aa-tRNA-synt_IIb"/>
</dbReference>
<dbReference type="InterPro" id="IPR006195">
    <property type="entry name" value="aa-tRNA-synth_II"/>
</dbReference>
<dbReference type="InterPro" id="IPR045864">
    <property type="entry name" value="aa-tRNA-synth_II/BPL/LPL"/>
</dbReference>
<dbReference type="InterPro" id="IPR004154">
    <property type="entry name" value="Anticodon-bd"/>
</dbReference>
<dbReference type="InterPro" id="IPR036621">
    <property type="entry name" value="Anticodon-bd_dom_sf"/>
</dbReference>
<dbReference type="InterPro" id="IPR012675">
    <property type="entry name" value="Beta-grasp_dom_sf"/>
</dbReference>
<dbReference type="InterPro" id="IPR004095">
    <property type="entry name" value="TGS"/>
</dbReference>
<dbReference type="InterPro" id="IPR012676">
    <property type="entry name" value="TGS-like"/>
</dbReference>
<dbReference type="InterPro" id="IPR002320">
    <property type="entry name" value="Thr-tRNA-ligase_IIa"/>
</dbReference>
<dbReference type="InterPro" id="IPR018163">
    <property type="entry name" value="Thr/Ala-tRNA-synth_IIc_edit"/>
</dbReference>
<dbReference type="InterPro" id="IPR033728">
    <property type="entry name" value="ThrRS_core"/>
</dbReference>
<dbReference type="InterPro" id="IPR012947">
    <property type="entry name" value="tRNA_SAD"/>
</dbReference>
<dbReference type="NCBIfam" id="TIGR00418">
    <property type="entry name" value="thrS"/>
    <property type="match status" value="1"/>
</dbReference>
<dbReference type="PANTHER" id="PTHR11451:SF44">
    <property type="entry name" value="THREONINE--TRNA LIGASE, CHLOROPLASTIC_MITOCHONDRIAL 2"/>
    <property type="match status" value="1"/>
</dbReference>
<dbReference type="PANTHER" id="PTHR11451">
    <property type="entry name" value="THREONINE-TRNA LIGASE"/>
    <property type="match status" value="1"/>
</dbReference>
<dbReference type="Pfam" id="PF03129">
    <property type="entry name" value="HGTP_anticodon"/>
    <property type="match status" value="1"/>
</dbReference>
<dbReference type="Pfam" id="PF02824">
    <property type="entry name" value="TGS"/>
    <property type="match status" value="1"/>
</dbReference>
<dbReference type="Pfam" id="PF00587">
    <property type="entry name" value="tRNA-synt_2b"/>
    <property type="match status" value="1"/>
</dbReference>
<dbReference type="Pfam" id="PF07973">
    <property type="entry name" value="tRNA_SAD"/>
    <property type="match status" value="1"/>
</dbReference>
<dbReference type="PRINTS" id="PR01047">
    <property type="entry name" value="TRNASYNTHTHR"/>
</dbReference>
<dbReference type="SMART" id="SM00863">
    <property type="entry name" value="tRNA_SAD"/>
    <property type="match status" value="1"/>
</dbReference>
<dbReference type="SUPFAM" id="SSF52954">
    <property type="entry name" value="Class II aaRS ABD-related"/>
    <property type="match status" value="1"/>
</dbReference>
<dbReference type="SUPFAM" id="SSF55681">
    <property type="entry name" value="Class II aaRS and biotin synthetases"/>
    <property type="match status" value="1"/>
</dbReference>
<dbReference type="SUPFAM" id="SSF81271">
    <property type="entry name" value="TGS-like"/>
    <property type="match status" value="1"/>
</dbReference>
<dbReference type="SUPFAM" id="SSF55186">
    <property type="entry name" value="ThrRS/AlaRS common domain"/>
    <property type="match status" value="1"/>
</dbReference>
<dbReference type="PROSITE" id="PS50862">
    <property type="entry name" value="AA_TRNA_LIGASE_II"/>
    <property type="match status" value="1"/>
</dbReference>
<dbReference type="PROSITE" id="PS51880">
    <property type="entry name" value="TGS"/>
    <property type="match status" value="1"/>
</dbReference>
<gene>
    <name evidence="1" type="primary">thrS</name>
    <name type="ordered locus">A9601_06531</name>
</gene>
<keyword id="KW-0030">Aminoacyl-tRNA synthetase</keyword>
<keyword id="KW-0067">ATP-binding</keyword>
<keyword id="KW-0963">Cytoplasm</keyword>
<keyword id="KW-0436">Ligase</keyword>
<keyword id="KW-0479">Metal-binding</keyword>
<keyword id="KW-0547">Nucleotide-binding</keyword>
<keyword id="KW-0648">Protein biosynthesis</keyword>
<keyword id="KW-0694">RNA-binding</keyword>
<keyword id="KW-0820">tRNA-binding</keyword>
<keyword id="KW-0862">Zinc</keyword>
<feature type="chain" id="PRO_1000020467" description="Threonine--tRNA ligase">
    <location>
        <begin position="1"/>
        <end position="638"/>
    </location>
</feature>
<feature type="domain" description="TGS" evidence="2">
    <location>
        <begin position="1"/>
        <end position="61"/>
    </location>
</feature>
<feature type="region of interest" description="Catalytic" evidence="1">
    <location>
        <begin position="242"/>
        <end position="533"/>
    </location>
</feature>
<feature type="binding site" evidence="1">
    <location>
        <position position="333"/>
    </location>
    <ligand>
        <name>Zn(2+)</name>
        <dbReference type="ChEBI" id="CHEBI:29105"/>
    </ligand>
</feature>
<feature type="binding site" evidence="1">
    <location>
        <position position="384"/>
    </location>
    <ligand>
        <name>Zn(2+)</name>
        <dbReference type="ChEBI" id="CHEBI:29105"/>
    </ligand>
</feature>
<feature type="binding site" evidence="1">
    <location>
        <position position="510"/>
    </location>
    <ligand>
        <name>Zn(2+)</name>
        <dbReference type="ChEBI" id="CHEBI:29105"/>
    </ligand>
</feature>